<reference key="1">
    <citation type="submission" date="2007-10" db="EMBL/GenBank/DDBJ databases">
        <title>Complete genome of Alkaliphilus oremlandii OhILAs.</title>
        <authorList>
            <person name="Copeland A."/>
            <person name="Lucas S."/>
            <person name="Lapidus A."/>
            <person name="Barry K."/>
            <person name="Detter J.C."/>
            <person name="Glavina del Rio T."/>
            <person name="Hammon N."/>
            <person name="Israni S."/>
            <person name="Dalin E."/>
            <person name="Tice H."/>
            <person name="Pitluck S."/>
            <person name="Chain P."/>
            <person name="Malfatti S."/>
            <person name="Shin M."/>
            <person name="Vergez L."/>
            <person name="Schmutz J."/>
            <person name="Larimer F."/>
            <person name="Land M."/>
            <person name="Hauser L."/>
            <person name="Kyrpides N."/>
            <person name="Mikhailova N."/>
            <person name="Stolz J.F."/>
            <person name="Dawson A."/>
            <person name="Fisher E."/>
            <person name="Crable B."/>
            <person name="Perera E."/>
            <person name="Lisak J."/>
            <person name="Ranganathan M."/>
            <person name="Basu P."/>
            <person name="Richardson P."/>
        </authorList>
    </citation>
    <scope>NUCLEOTIDE SEQUENCE [LARGE SCALE GENOMIC DNA]</scope>
    <source>
        <strain>OhILAs</strain>
    </source>
</reference>
<dbReference type="EC" id="3.2.2.-" evidence="1"/>
<dbReference type="EMBL" id="CP000853">
    <property type="protein sequence ID" value="ABW18704.1"/>
    <property type="molecule type" value="Genomic_DNA"/>
</dbReference>
<dbReference type="RefSeq" id="WP_012159016.1">
    <property type="nucleotide sequence ID" value="NC_009922.1"/>
</dbReference>
<dbReference type="SMR" id="A8MF35"/>
<dbReference type="STRING" id="350688.Clos_1158"/>
<dbReference type="KEGG" id="aoe:Clos_1158"/>
<dbReference type="eggNOG" id="COG2094">
    <property type="taxonomic scope" value="Bacteria"/>
</dbReference>
<dbReference type="HOGENOM" id="CLU_060471_0_2_9"/>
<dbReference type="OrthoDB" id="9794313at2"/>
<dbReference type="Proteomes" id="UP000000269">
    <property type="component" value="Chromosome"/>
</dbReference>
<dbReference type="GO" id="GO:0003905">
    <property type="term" value="F:alkylbase DNA N-glycosylase activity"/>
    <property type="evidence" value="ECO:0007669"/>
    <property type="project" value="InterPro"/>
</dbReference>
<dbReference type="GO" id="GO:0003677">
    <property type="term" value="F:DNA binding"/>
    <property type="evidence" value="ECO:0007669"/>
    <property type="project" value="InterPro"/>
</dbReference>
<dbReference type="GO" id="GO:0006284">
    <property type="term" value="P:base-excision repair"/>
    <property type="evidence" value="ECO:0007669"/>
    <property type="project" value="InterPro"/>
</dbReference>
<dbReference type="CDD" id="cd00540">
    <property type="entry name" value="AAG"/>
    <property type="match status" value="1"/>
</dbReference>
<dbReference type="FunFam" id="3.10.300.10:FF:000001">
    <property type="entry name" value="Putative 3-methyladenine DNA glycosylase"/>
    <property type="match status" value="1"/>
</dbReference>
<dbReference type="Gene3D" id="3.10.300.10">
    <property type="entry name" value="Methylpurine-DNA glycosylase (MPG)"/>
    <property type="match status" value="1"/>
</dbReference>
<dbReference type="HAMAP" id="MF_00527">
    <property type="entry name" value="3MGH"/>
    <property type="match status" value="1"/>
</dbReference>
<dbReference type="InterPro" id="IPR011034">
    <property type="entry name" value="Formyl_transferase-like_C_sf"/>
</dbReference>
<dbReference type="InterPro" id="IPR003180">
    <property type="entry name" value="MPG"/>
</dbReference>
<dbReference type="InterPro" id="IPR036995">
    <property type="entry name" value="MPG_sf"/>
</dbReference>
<dbReference type="NCBIfam" id="TIGR00567">
    <property type="entry name" value="3mg"/>
    <property type="match status" value="1"/>
</dbReference>
<dbReference type="NCBIfam" id="NF002001">
    <property type="entry name" value="PRK00802.1-1"/>
    <property type="match status" value="1"/>
</dbReference>
<dbReference type="NCBIfam" id="NF002003">
    <property type="entry name" value="PRK00802.1-3"/>
    <property type="match status" value="1"/>
</dbReference>
<dbReference type="PANTHER" id="PTHR10429">
    <property type="entry name" value="DNA-3-METHYLADENINE GLYCOSYLASE"/>
    <property type="match status" value="1"/>
</dbReference>
<dbReference type="PANTHER" id="PTHR10429:SF0">
    <property type="entry name" value="DNA-3-METHYLADENINE GLYCOSYLASE"/>
    <property type="match status" value="1"/>
</dbReference>
<dbReference type="Pfam" id="PF02245">
    <property type="entry name" value="Pur_DNA_glyco"/>
    <property type="match status" value="1"/>
</dbReference>
<dbReference type="SUPFAM" id="SSF50486">
    <property type="entry name" value="FMT C-terminal domain-like"/>
    <property type="match status" value="1"/>
</dbReference>
<protein>
    <recommendedName>
        <fullName evidence="1">Putative 3-methyladenine DNA glycosylase</fullName>
        <ecNumber evidence="1">3.2.2.-</ecNumber>
    </recommendedName>
</protein>
<organism>
    <name type="scientific">Alkaliphilus oremlandii (strain OhILAs)</name>
    <name type="common">Clostridium oremlandii (strain OhILAs)</name>
    <dbReference type="NCBI Taxonomy" id="350688"/>
    <lineage>
        <taxon>Bacteria</taxon>
        <taxon>Bacillati</taxon>
        <taxon>Bacillota</taxon>
        <taxon>Clostridia</taxon>
        <taxon>Peptostreptococcales</taxon>
        <taxon>Natronincolaceae</taxon>
        <taxon>Alkaliphilus</taxon>
    </lineage>
</organism>
<evidence type="ECO:0000255" key="1">
    <source>
        <dbReference type="HAMAP-Rule" id="MF_00527"/>
    </source>
</evidence>
<name>3MGH_ALKOO</name>
<accession>A8MF35</accession>
<proteinExistence type="inferred from homology"/>
<gene>
    <name type="ordered locus">Clos_1158</name>
</gene>
<feature type="chain" id="PRO_1000060929" description="Putative 3-methyladenine DNA glycosylase">
    <location>
        <begin position="1"/>
        <end position="202"/>
    </location>
</feature>
<comment type="similarity">
    <text evidence="1">Belongs to the DNA glycosylase MPG family.</text>
</comment>
<keyword id="KW-0227">DNA damage</keyword>
<keyword id="KW-0234">DNA repair</keyword>
<keyword id="KW-0378">Hydrolase</keyword>
<keyword id="KW-1185">Reference proteome</keyword>
<sequence length="202" mass="23112">MKLERKFYDRPTLEVSKDLLGKKLVHYVKGEKLSARIVEVEAYIGAIDKAAHSYNNKITERTKIMFGPPGYAYVYLIYGMYHCMNIVTEKDGVAAAVLIRAVEPVNGIETMANYRYSKPIEDLTKKQIHNLTSGPGKLCVAMNISKINNGADLCGEEMWIEADGYHNFEIVTTKRINIDYAEEAIDFPWRFYIKDNPFISRK</sequence>